<dbReference type="EC" id="2.5.1.19" evidence="1"/>
<dbReference type="EMBL" id="CP000736">
    <property type="protein sequence ID" value="ABR52401.1"/>
    <property type="molecule type" value="Genomic_DNA"/>
</dbReference>
<dbReference type="SMR" id="A6U1T3"/>
<dbReference type="KEGG" id="sah:SaurJH1_1552"/>
<dbReference type="HOGENOM" id="CLU_024321_0_1_9"/>
<dbReference type="UniPathway" id="UPA00053">
    <property type="reaction ID" value="UER00089"/>
</dbReference>
<dbReference type="GO" id="GO:0005737">
    <property type="term" value="C:cytoplasm"/>
    <property type="evidence" value="ECO:0007669"/>
    <property type="project" value="UniProtKB-SubCell"/>
</dbReference>
<dbReference type="GO" id="GO:0003866">
    <property type="term" value="F:3-phosphoshikimate 1-carboxyvinyltransferase activity"/>
    <property type="evidence" value="ECO:0007669"/>
    <property type="project" value="UniProtKB-UniRule"/>
</dbReference>
<dbReference type="GO" id="GO:0008652">
    <property type="term" value="P:amino acid biosynthetic process"/>
    <property type="evidence" value="ECO:0007669"/>
    <property type="project" value="UniProtKB-KW"/>
</dbReference>
<dbReference type="GO" id="GO:0009073">
    <property type="term" value="P:aromatic amino acid family biosynthetic process"/>
    <property type="evidence" value="ECO:0007669"/>
    <property type="project" value="UniProtKB-KW"/>
</dbReference>
<dbReference type="GO" id="GO:0009423">
    <property type="term" value="P:chorismate biosynthetic process"/>
    <property type="evidence" value="ECO:0007669"/>
    <property type="project" value="UniProtKB-UniRule"/>
</dbReference>
<dbReference type="CDD" id="cd01556">
    <property type="entry name" value="EPSP_synthase"/>
    <property type="match status" value="1"/>
</dbReference>
<dbReference type="FunFam" id="3.65.10.10:FF:000005">
    <property type="entry name" value="3-phosphoshikimate 1-carboxyvinyltransferase"/>
    <property type="match status" value="1"/>
</dbReference>
<dbReference type="FunFam" id="3.65.10.10:FF:000006">
    <property type="entry name" value="3-phosphoshikimate 1-carboxyvinyltransferase"/>
    <property type="match status" value="1"/>
</dbReference>
<dbReference type="Gene3D" id="3.65.10.10">
    <property type="entry name" value="Enolpyruvate transferase domain"/>
    <property type="match status" value="2"/>
</dbReference>
<dbReference type="HAMAP" id="MF_00210">
    <property type="entry name" value="EPSP_synth"/>
    <property type="match status" value="1"/>
</dbReference>
<dbReference type="InterPro" id="IPR001986">
    <property type="entry name" value="Enolpyruvate_Tfrase_dom"/>
</dbReference>
<dbReference type="InterPro" id="IPR036968">
    <property type="entry name" value="Enolpyruvate_Tfrase_sf"/>
</dbReference>
<dbReference type="InterPro" id="IPR006264">
    <property type="entry name" value="EPSP_synthase"/>
</dbReference>
<dbReference type="InterPro" id="IPR023193">
    <property type="entry name" value="EPSP_synthase_CS"/>
</dbReference>
<dbReference type="InterPro" id="IPR013792">
    <property type="entry name" value="RNA3'P_cycl/enolpyr_Trfase_a/b"/>
</dbReference>
<dbReference type="NCBIfam" id="TIGR01356">
    <property type="entry name" value="aroA"/>
    <property type="match status" value="1"/>
</dbReference>
<dbReference type="PANTHER" id="PTHR21090">
    <property type="entry name" value="AROM/DEHYDROQUINATE SYNTHASE"/>
    <property type="match status" value="1"/>
</dbReference>
<dbReference type="PANTHER" id="PTHR21090:SF5">
    <property type="entry name" value="PENTAFUNCTIONAL AROM POLYPEPTIDE"/>
    <property type="match status" value="1"/>
</dbReference>
<dbReference type="Pfam" id="PF00275">
    <property type="entry name" value="EPSP_synthase"/>
    <property type="match status" value="1"/>
</dbReference>
<dbReference type="PIRSF" id="PIRSF000505">
    <property type="entry name" value="EPSPS"/>
    <property type="match status" value="1"/>
</dbReference>
<dbReference type="SUPFAM" id="SSF55205">
    <property type="entry name" value="EPT/RTPC-like"/>
    <property type="match status" value="1"/>
</dbReference>
<dbReference type="PROSITE" id="PS00104">
    <property type="entry name" value="EPSP_SYNTHASE_1"/>
    <property type="match status" value="1"/>
</dbReference>
<dbReference type="PROSITE" id="PS00885">
    <property type="entry name" value="EPSP_SYNTHASE_2"/>
    <property type="match status" value="1"/>
</dbReference>
<proteinExistence type="inferred from homology"/>
<gene>
    <name evidence="1" type="primary">aroA</name>
    <name type="ordered locus">SaurJH1_1552</name>
</gene>
<protein>
    <recommendedName>
        <fullName evidence="1">3-phosphoshikimate 1-carboxyvinyltransferase</fullName>
        <ecNumber evidence="1">2.5.1.19</ecNumber>
    </recommendedName>
    <alternativeName>
        <fullName evidence="1">5-enolpyruvylshikimate-3-phosphate synthase</fullName>
        <shortName evidence="1">EPSP synthase</shortName>
        <shortName evidence="1">EPSPS</shortName>
    </alternativeName>
</protein>
<evidence type="ECO:0000255" key="1">
    <source>
        <dbReference type="HAMAP-Rule" id="MF_00210"/>
    </source>
</evidence>
<reference key="1">
    <citation type="submission" date="2007-06" db="EMBL/GenBank/DDBJ databases">
        <title>Complete sequence of chromosome of Staphylococcus aureus subsp. aureus JH1.</title>
        <authorList>
            <consortium name="US DOE Joint Genome Institute"/>
            <person name="Copeland A."/>
            <person name="Lucas S."/>
            <person name="Lapidus A."/>
            <person name="Barry K."/>
            <person name="Detter J.C."/>
            <person name="Glavina del Rio T."/>
            <person name="Hammon N."/>
            <person name="Israni S."/>
            <person name="Dalin E."/>
            <person name="Tice H."/>
            <person name="Pitluck S."/>
            <person name="Chain P."/>
            <person name="Malfatti S."/>
            <person name="Shin M."/>
            <person name="Vergez L."/>
            <person name="Schmutz J."/>
            <person name="Larimer F."/>
            <person name="Land M."/>
            <person name="Hauser L."/>
            <person name="Kyrpides N."/>
            <person name="Ivanova N."/>
            <person name="Tomasz A."/>
            <person name="Richardson P."/>
        </authorList>
    </citation>
    <scope>NUCLEOTIDE SEQUENCE [LARGE SCALE GENOMIC DNA]</scope>
    <source>
        <strain>JH1</strain>
    </source>
</reference>
<sequence length="432" mass="47072">MVSEQIIDISGPLKGEIEVPGDKSMTHRAIMLASLAEGTSNIYKPLLGEDCRRTMDIFRLLGVDIKEDEDKLVVNSPGYKAFKTPHQVLYTGNSGTTTRLLAGLLSGLGIESVLSGDVSIGKRPMDRVLRPLKLMDANIEGIEDNYTPLIIKPSVIKGINYQMEVASAQVKSAILFASLFSNDTTVIKELDVSRNHTETMFRHFNIPIEAERLSITTTPDAIQHIKPADFHVPGDISSAAFFIVAALITPESDVTIHNVGINPTRSGIIDIVEKMGGNIQLFNQTTGAEPTASIRIQYTPMLQPITIEGELVTKAIDELPVIALLCTQAVGTSTIKDAEELKVKETNRIDTTADMLNLLGFELQPTNDGLIIHPSEFKTNATVDSLTDHRIGMMLAVASLLSSEPVKIKQFDAVNVSFPGFLPKLKLLENEG</sequence>
<feature type="chain" id="PRO_1000078001" description="3-phosphoshikimate 1-carboxyvinyltransferase">
    <location>
        <begin position="1"/>
        <end position="432"/>
    </location>
</feature>
<feature type="active site" description="Proton acceptor" evidence="1">
    <location>
        <position position="317"/>
    </location>
</feature>
<feature type="binding site" evidence="1">
    <location>
        <position position="23"/>
    </location>
    <ligand>
        <name>3-phosphoshikimate</name>
        <dbReference type="ChEBI" id="CHEBI:145989"/>
    </ligand>
</feature>
<feature type="binding site" evidence="1">
    <location>
        <position position="23"/>
    </location>
    <ligand>
        <name>phosphoenolpyruvate</name>
        <dbReference type="ChEBI" id="CHEBI:58702"/>
    </ligand>
</feature>
<feature type="binding site" evidence="1">
    <location>
        <position position="24"/>
    </location>
    <ligand>
        <name>3-phosphoshikimate</name>
        <dbReference type="ChEBI" id="CHEBI:145989"/>
    </ligand>
</feature>
<feature type="binding site" evidence="1">
    <location>
        <position position="28"/>
    </location>
    <ligand>
        <name>3-phosphoshikimate</name>
        <dbReference type="ChEBI" id="CHEBI:145989"/>
    </ligand>
</feature>
<feature type="binding site" evidence="1">
    <location>
        <position position="95"/>
    </location>
    <ligand>
        <name>phosphoenolpyruvate</name>
        <dbReference type="ChEBI" id="CHEBI:58702"/>
    </ligand>
</feature>
<feature type="binding site" evidence="1">
    <location>
        <position position="123"/>
    </location>
    <ligand>
        <name>phosphoenolpyruvate</name>
        <dbReference type="ChEBI" id="CHEBI:58702"/>
    </ligand>
</feature>
<feature type="binding site" evidence="1">
    <location>
        <position position="167"/>
    </location>
    <ligand>
        <name>3-phosphoshikimate</name>
        <dbReference type="ChEBI" id="CHEBI:145989"/>
    </ligand>
</feature>
<feature type="binding site" evidence="1">
    <location>
        <position position="169"/>
    </location>
    <ligand>
        <name>3-phosphoshikimate</name>
        <dbReference type="ChEBI" id="CHEBI:145989"/>
    </ligand>
</feature>
<feature type="binding site" evidence="1">
    <location>
        <position position="169"/>
    </location>
    <ligand>
        <name>phosphoenolpyruvate</name>
        <dbReference type="ChEBI" id="CHEBI:58702"/>
    </ligand>
</feature>
<feature type="binding site" evidence="1">
    <location>
        <position position="317"/>
    </location>
    <ligand>
        <name>3-phosphoshikimate</name>
        <dbReference type="ChEBI" id="CHEBI:145989"/>
    </ligand>
</feature>
<feature type="binding site" evidence="1">
    <location>
        <position position="344"/>
    </location>
    <ligand>
        <name>3-phosphoshikimate</name>
        <dbReference type="ChEBI" id="CHEBI:145989"/>
    </ligand>
</feature>
<feature type="binding site" evidence="1">
    <location>
        <position position="348"/>
    </location>
    <ligand>
        <name>phosphoenolpyruvate</name>
        <dbReference type="ChEBI" id="CHEBI:58702"/>
    </ligand>
</feature>
<feature type="binding site" evidence="1">
    <location>
        <position position="390"/>
    </location>
    <ligand>
        <name>phosphoenolpyruvate</name>
        <dbReference type="ChEBI" id="CHEBI:58702"/>
    </ligand>
</feature>
<organism>
    <name type="scientific">Staphylococcus aureus (strain JH1)</name>
    <dbReference type="NCBI Taxonomy" id="359787"/>
    <lineage>
        <taxon>Bacteria</taxon>
        <taxon>Bacillati</taxon>
        <taxon>Bacillota</taxon>
        <taxon>Bacilli</taxon>
        <taxon>Bacillales</taxon>
        <taxon>Staphylococcaceae</taxon>
        <taxon>Staphylococcus</taxon>
    </lineage>
</organism>
<name>AROA_STAA2</name>
<keyword id="KW-0028">Amino-acid biosynthesis</keyword>
<keyword id="KW-0057">Aromatic amino acid biosynthesis</keyword>
<keyword id="KW-0963">Cytoplasm</keyword>
<keyword id="KW-0808">Transferase</keyword>
<accession>A6U1T3</accession>
<comment type="function">
    <text evidence="1">Catalyzes the transfer of the enolpyruvyl moiety of phosphoenolpyruvate (PEP) to the 5-hydroxyl of shikimate-3-phosphate (S3P) to produce enolpyruvyl shikimate-3-phosphate and inorganic phosphate.</text>
</comment>
<comment type="catalytic activity">
    <reaction evidence="1">
        <text>3-phosphoshikimate + phosphoenolpyruvate = 5-O-(1-carboxyvinyl)-3-phosphoshikimate + phosphate</text>
        <dbReference type="Rhea" id="RHEA:21256"/>
        <dbReference type="ChEBI" id="CHEBI:43474"/>
        <dbReference type="ChEBI" id="CHEBI:57701"/>
        <dbReference type="ChEBI" id="CHEBI:58702"/>
        <dbReference type="ChEBI" id="CHEBI:145989"/>
        <dbReference type="EC" id="2.5.1.19"/>
    </reaction>
    <physiologicalReaction direction="left-to-right" evidence="1">
        <dbReference type="Rhea" id="RHEA:21257"/>
    </physiologicalReaction>
</comment>
<comment type="pathway">
    <text evidence="1">Metabolic intermediate biosynthesis; chorismate biosynthesis; chorismate from D-erythrose 4-phosphate and phosphoenolpyruvate: step 6/7.</text>
</comment>
<comment type="subunit">
    <text evidence="1">Monomer.</text>
</comment>
<comment type="subcellular location">
    <subcellularLocation>
        <location evidence="1">Cytoplasm</location>
    </subcellularLocation>
</comment>
<comment type="similarity">
    <text evidence="1">Belongs to the EPSP synthase family.</text>
</comment>